<name>RS4_ACHLI</name>
<organism>
    <name type="scientific">Acholeplasma laidlawii (strain PG-8A)</name>
    <dbReference type="NCBI Taxonomy" id="441768"/>
    <lineage>
        <taxon>Bacteria</taxon>
        <taxon>Bacillati</taxon>
        <taxon>Mycoplasmatota</taxon>
        <taxon>Mollicutes</taxon>
        <taxon>Acholeplasmatales</taxon>
        <taxon>Acholeplasmataceae</taxon>
        <taxon>Acholeplasma</taxon>
    </lineage>
</organism>
<feature type="chain" id="PRO_1000085958" description="Small ribosomal subunit protein uS4">
    <location>
        <begin position="1"/>
        <end position="198"/>
    </location>
</feature>
<feature type="domain" description="S4 RNA-binding" evidence="1">
    <location>
        <begin position="91"/>
        <end position="154"/>
    </location>
</feature>
<feature type="region of interest" description="Disordered" evidence="2">
    <location>
        <begin position="26"/>
        <end position="45"/>
    </location>
</feature>
<keyword id="KW-1185">Reference proteome</keyword>
<keyword id="KW-0687">Ribonucleoprotein</keyword>
<keyword id="KW-0689">Ribosomal protein</keyword>
<keyword id="KW-0694">RNA-binding</keyword>
<keyword id="KW-0699">rRNA-binding</keyword>
<evidence type="ECO:0000255" key="1">
    <source>
        <dbReference type="HAMAP-Rule" id="MF_01306"/>
    </source>
</evidence>
<evidence type="ECO:0000256" key="2">
    <source>
        <dbReference type="SAM" id="MobiDB-lite"/>
    </source>
</evidence>
<evidence type="ECO:0000305" key="3"/>
<dbReference type="EMBL" id="CP000896">
    <property type="protein sequence ID" value="ABX81799.1"/>
    <property type="molecule type" value="Genomic_DNA"/>
</dbReference>
<dbReference type="RefSeq" id="WP_012243130.1">
    <property type="nucleotide sequence ID" value="NC_010163.1"/>
</dbReference>
<dbReference type="SMR" id="A9NHG9"/>
<dbReference type="STRING" id="441768.ACL_1200"/>
<dbReference type="GeneID" id="41339339"/>
<dbReference type="KEGG" id="acl:ACL_1200"/>
<dbReference type="eggNOG" id="COG0522">
    <property type="taxonomic scope" value="Bacteria"/>
</dbReference>
<dbReference type="HOGENOM" id="CLU_092403_0_1_14"/>
<dbReference type="OrthoDB" id="9803672at2"/>
<dbReference type="Proteomes" id="UP000008558">
    <property type="component" value="Chromosome"/>
</dbReference>
<dbReference type="GO" id="GO:0015935">
    <property type="term" value="C:small ribosomal subunit"/>
    <property type="evidence" value="ECO:0007669"/>
    <property type="project" value="InterPro"/>
</dbReference>
<dbReference type="GO" id="GO:0019843">
    <property type="term" value="F:rRNA binding"/>
    <property type="evidence" value="ECO:0007669"/>
    <property type="project" value="UniProtKB-UniRule"/>
</dbReference>
<dbReference type="GO" id="GO:0003735">
    <property type="term" value="F:structural constituent of ribosome"/>
    <property type="evidence" value="ECO:0007669"/>
    <property type="project" value="InterPro"/>
</dbReference>
<dbReference type="GO" id="GO:0042274">
    <property type="term" value="P:ribosomal small subunit biogenesis"/>
    <property type="evidence" value="ECO:0007669"/>
    <property type="project" value="TreeGrafter"/>
</dbReference>
<dbReference type="GO" id="GO:0006412">
    <property type="term" value="P:translation"/>
    <property type="evidence" value="ECO:0007669"/>
    <property type="project" value="UniProtKB-UniRule"/>
</dbReference>
<dbReference type="CDD" id="cd00165">
    <property type="entry name" value="S4"/>
    <property type="match status" value="1"/>
</dbReference>
<dbReference type="FunFam" id="3.10.290.10:FF:000001">
    <property type="entry name" value="30S ribosomal protein S4"/>
    <property type="match status" value="1"/>
</dbReference>
<dbReference type="Gene3D" id="1.10.1050.10">
    <property type="entry name" value="Ribosomal Protein S4 Delta 41, Chain A, domain 1"/>
    <property type="match status" value="1"/>
</dbReference>
<dbReference type="Gene3D" id="3.10.290.10">
    <property type="entry name" value="RNA-binding S4 domain"/>
    <property type="match status" value="1"/>
</dbReference>
<dbReference type="HAMAP" id="MF_01306_B">
    <property type="entry name" value="Ribosomal_uS4_B"/>
    <property type="match status" value="1"/>
</dbReference>
<dbReference type="InterPro" id="IPR022801">
    <property type="entry name" value="Ribosomal_uS4"/>
</dbReference>
<dbReference type="InterPro" id="IPR005709">
    <property type="entry name" value="Ribosomal_uS4_bac-type"/>
</dbReference>
<dbReference type="InterPro" id="IPR018079">
    <property type="entry name" value="Ribosomal_uS4_CS"/>
</dbReference>
<dbReference type="InterPro" id="IPR001912">
    <property type="entry name" value="Ribosomal_uS4_N"/>
</dbReference>
<dbReference type="InterPro" id="IPR002942">
    <property type="entry name" value="S4_RNA-bd"/>
</dbReference>
<dbReference type="InterPro" id="IPR036986">
    <property type="entry name" value="S4_RNA-bd_sf"/>
</dbReference>
<dbReference type="NCBIfam" id="NF003717">
    <property type="entry name" value="PRK05327.1"/>
    <property type="match status" value="1"/>
</dbReference>
<dbReference type="NCBIfam" id="TIGR01017">
    <property type="entry name" value="rpsD_bact"/>
    <property type="match status" value="1"/>
</dbReference>
<dbReference type="PANTHER" id="PTHR11831">
    <property type="entry name" value="30S 40S RIBOSOMAL PROTEIN"/>
    <property type="match status" value="1"/>
</dbReference>
<dbReference type="PANTHER" id="PTHR11831:SF4">
    <property type="entry name" value="SMALL RIBOSOMAL SUBUNIT PROTEIN US4M"/>
    <property type="match status" value="1"/>
</dbReference>
<dbReference type="Pfam" id="PF00163">
    <property type="entry name" value="Ribosomal_S4"/>
    <property type="match status" value="1"/>
</dbReference>
<dbReference type="Pfam" id="PF01479">
    <property type="entry name" value="S4"/>
    <property type="match status" value="1"/>
</dbReference>
<dbReference type="SMART" id="SM01390">
    <property type="entry name" value="Ribosomal_S4"/>
    <property type="match status" value="1"/>
</dbReference>
<dbReference type="SMART" id="SM00363">
    <property type="entry name" value="S4"/>
    <property type="match status" value="1"/>
</dbReference>
<dbReference type="SUPFAM" id="SSF55174">
    <property type="entry name" value="Alpha-L RNA-binding motif"/>
    <property type="match status" value="1"/>
</dbReference>
<dbReference type="PROSITE" id="PS00632">
    <property type="entry name" value="RIBOSOMAL_S4"/>
    <property type="match status" value="1"/>
</dbReference>
<dbReference type="PROSITE" id="PS50889">
    <property type="entry name" value="S4"/>
    <property type="match status" value="1"/>
</dbReference>
<sequence length="198" mass="22801">MSRFTGSTWKVSRRLGYSISETGKELKKRPYAPGQHGQRRSKLSNYGIQLQEKQKVRFVYGVSEKQFKKTFLESAKMQGKQGENFLKLLESRLDNVVYRLGFTKTRAQARQLVNHGHILVDGKKVDIPSYRLAPGQTVQLKEKSKNLTIVKEALEAQFAHVDYVALDANGVGTFSRLPERNEFLFDINEQLIVEFYNR</sequence>
<protein>
    <recommendedName>
        <fullName evidence="1">Small ribosomal subunit protein uS4</fullName>
    </recommendedName>
    <alternativeName>
        <fullName evidence="3">30S ribosomal protein S4</fullName>
    </alternativeName>
</protein>
<comment type="function">
    <text evidence="1">One of the primary rRNA binding proteins, it binds directly to 16S rRNA where it nucleates assembly of the body of the 30S subunit.</text>
</comment>
<comment type="function">
    <text evidence="1">With S5 and S12 plays an important role in translational accuracy.</text>
</comment>
<comment type="subunit">
    <text evidence="1">Part of the 30S ribosomal subunit. Contacts protein S5. The interaction surface between S4 and S5 is involved in control of translational fidelity.</text>
</comment>
<comment type="similarity">
    <text evidence="1">Belongs to the universal ribosomal protein uS4 family.</text>
</comment>
<proteinExistence type="inferred from homology"/>
<accession>A9NHG9</accession>
<reference key="1">
    <citation type="journal article" date="2011" name="J. Bacteriol.">
        <title>Complete genome and proteome of Acholeplasma laidlawii.</title>
        <authorList>
            <person name="Lazarev V.N."/>
            <person name="Levitskii S.A."/>
            <person name="Basovskii Y.I."/>
            <person name="Chukin M.M."/>
            <person name="Akopian T.A."/>
            <person name="Vereshchagin V.V."/>
            <person name="Kostrjukova E.S."/>
            <person name="Kovaleva G.Y."/>
            <person name="Kazanov M.D."/>
            <person name="Malko D.B."/>
            <person name="Vitreschak A.G."/>
            <person name="Sernova N.V."/>
            <person name="Gelfand M.S."/>
            <person name="Demina I.A."/>
            <person name="Serebryakova M.V."/>
            <person name="Galyamina M.A."/>
            <person name="Vtyurin N.N."/>
            <person name="Rogov S.I."/>
            <person name="Alexeev D.G."/>
            <person name="Ladygina V.G."/>
            <person name="Govorun V.M."/>
        </authorList>
    </citation>
    <scope>NUCLEOTIDE SEQUENCE [LARGE SCALE GENOMIC DNA]</scope>
    <source>
        <strain>PG-8A</strain>
    </source>
</reference>
<gene>
    <name evidence="1" type="primary">rpsD</name>
    <name type="ordered locus">ACL_1200</name>
</gene>